<name>DPOLL_RAT</name>
<evidence type="ECO:0000250" key="1"/>
<evidence type="ECO:0000250" key="2">
    <source>
        <dbReference type="UniProtKB" id="Q9UGP5"/>
    </source>
</evidence>
<evidence type="ECO:0000255" key="3">
    <source>
        <dbReference type="PROSITE-ProRule" id="PRU00033"/>
    </source>
</evidence>
<evidence type="ECO:0000256" key="4">
    <source>
        <dbReference type="SAM" id="MobiDB-lite"/>
    </source>
</evidence>
<evidence type="ECO:0000305" key="5"/>
<evidence type="ECO:0000312" key="6">
    <source>
        <dbReference type="RGD" id="1308053"/>
    </source>
</evidence>
<keyword id="KW-0227">DNA damage</keyword>
<keyword id="KW-0234">DNA repair</keyword>
<keyword id="KW-0235">DNA replication</keyword>
<keyword id="KW-0237">DNA synthesis</keyword>
<keyword id="KW-0238">DNA-binding</keyword>
<keyword id="KW-0239">DNA-directed DNA polymerase</keyword>
<keyword id="KW-0456">Lyase</keyword>
<keyword id="KW-0464">Manganese</keyword>
<keyword id="KW-0479">Metal-binding</keyword>
<keyword id="KW-0548">Nucleotidyltransferase</keyword>
<keyword id="KW-0539">Nucleus</keyword>
<keyword id="KW-1185">Reference proteome</keyword>
<keyword id="KW-0808">Transferase</keyword>
<sequence length="573" mass="62401">MDPQGILKAFPKRKKIHADPSSNALAKIPKREAGDARGWLSSLRAHIMPTGIGRARAELFEKQIIQHGGQVCSAQAPGVTHIVVDEGMDYERALRLLRLPQLPPGAQLVKSAWLSLCLQEKKLTDTDGFSLSSPKRSLNEPQPSKSGQDASAPGTQGVLPRTTLSLSPPCTRAVSPPPKAEKPPKTQTQLSSEDEASDGEGPQVSSADLQALISGHYPTPPGEDGGPDPAPEALGKWVCAQPSSQKATNYNLHITEKLEVLAKAYNVQGDKWRALGYAKAINALKSFHKPVSSYQEACSIPGVGRRMAEKVMEILESGHLRKLDHISDSVPVLELFSNIWGAGTKTAQMWYHQGFRSLEDIRGLASLTAQQAIGLKHYDDFLDRMPREEAAEIEQMVRVSAQAFNPGLLCVACGSFRRGKVTCGDVDVLITHPDGRSHQGIFSPLLDSLRQQGFLTDDLVSQEENGQQQKYLGVCRLPGAGQRHRRLDIIVVPYSEFACALLYFTGSAHFNRSMRALAKTKGMSLSEHALSAAVVRNSQGVKVGAGQVLPTPTEKDVFKLLGLPYREPAERDW</sequence>
<gene>
    <name evidence="6" type="primary">Poll</name>
</gene>
<comment type="function">
    <text evidence="2">DNA polymerase that functions in several pathways of DNA repair. Involved in base excision repair (BER) responsible for repair of lesions that give rise to abasic (AP) sites in DNA. Also contributes to DNA double-strand break repair by non-homologous end joining and homologous recombination. Has both template-dependent and template-independent (terminal transferase) DNA polymerase activities. Also has a 5'-deoxyribose-5-phosphate lyase (dRP lyase) activity.</text>
</comment>
<comment type="catalytic activity">
    <reaction evidence="2">
        <text>DNA(n) + a 2'-deoxyribonucleoside 5'-triphosphate = DNA(n+1) + diphosphate</text>
        <dbReference type="Rhea" id="RHEA:22508"/>
        <dbReference type="Rhea" id="RHEA-COMP:17339"/>
        <dbReference type="Rhea" id="RHEA-COMP:17340"/>
        <dbReference type="ChEBI" id="CHEBI:33019"/>
        <dbReference type="ChEBI" id="CHEBI:61560"/>
        <dbReference type="ChEBI" id="CHEBI:173112"/>
        <dbReference type="EC" id="2.7.7.7"/>
    </reaction>
</comment>
<comment type="cofactor">
    <cofactor evidence="2">
        <name>Mn(2+)</name>
        <dbReference type="ChEBI" id="CHEBI:29035"/>
    </cofactor>
</comment>
<comment type="subunit">
    <text evidence="2">Interacts with PCNA. Interacts with PAXX; promoting POLL recruitment to double-strand breaks (DSBs) and stimulation of the end-filling activity of POLL. Interacts with XRCC4; promoting POLL recruitment to double-strand breaks (DSBs) and stimulation of the end-filling activity of POLL. Interacts with NHEJ1/XLF; promoting POLL recruitment to double-strand breaks (DSBs) and stimulation of the end-filling activity of POLL.</text>
</comment>
<comment type="subcellular location">
    <subcellularLocation>
        <location evidence="2">Nucleus</location>
    </subcellularLocation>
</comment>
<comment type="similarity">
    <text evidence="5">Belongs to the DNA polymerase type-X family.</text>
</comment>
<dbReference type="EC" id="2.7.7.7" evidence="2"/>
<dbReference type="EC" id="4.2.99.-" evidence="2"/>
<dbReference type="EMBL" id="BC085841">
    <property type="protein sequence ID" value="AAH85841.1"/>
    <property type="molecule type" value="mRNA"/>
</dbReference>
<dbReference type="RefSeq" id="NP_001014190.1">
    <property type="nucleotide sequence ID" value="NM_001014168.1"/>
</dbReference>
<dbReference type="SMR" id="Q5RKI3"/>
<dbReference type="FunCoup" id="Q5RKI3">
    <property type="interactions" value="1348"/>
</dbReference>
<dbReference type="STRING" id="10116.ENSRNOP00000023137"/>
<dbReference type="GlyGen" id="Q5RKI3">
    <property type="glycosylation" value="1 site"/>
</dbReference>
<dbReference type="iPTMnet" id="Q5RKI3"/>
<dbReference type="PhosphoSitePlus" id="Q5RKI3"/>
<dbReference type="PaxDb" id="10116-ENSRNOP00000023137"/>
<dbReference type="Ensembl" id="ENSRNOT00000023137.6">
    <property type="protein sequence ID" value="ENSRNOP00000023137.4"/>
    <property type="gene ID" value="ENSRNOG00000016748.6"/>
</dbReference>
<dbReference type="GeneID" id="361767"/>
<dbReference type="KEGG" id="rno:361767"/>
<dbReference type="AGR" id="RGD:1308053"/>
<dbReference type="CTD" id="27343"/>
<dbReference type="RGD" id="1308053">
    <property type="gene designation" value="Poll"/>
</dbReference>
<dbReference type="eggNOG" id="KOG2534">
    <property type="taxonomic scope" value="Eukaryota"/>
</dbReference>
<dbReference type="GeneTree" id="ENSGT00940000158515"/>
<dbReference type="HOGENOM" id="CLU_008698_6_1_1"/>
<dbReference type="InParanoid" id="Q5RKI3"/>
<dbReference type="OMA" id="KWHGASA"/>
<dbReference type="OrthoDB" id="205514at2759"/>
<dbReference type="PhylomeDB" id="Q5RKI3"/>
<dbReference type="TreeFam" id="TF103011"/>
<dbReference type="Reactome" id="R-RNO-5693571">
    <property type="pathway name" value="Nonhomologous End-Joining (NHEJ)"/>
</dbReference>
<dbReference type="PRO" id="PR:Q5RKI3"/>
<dbReference type="Proteomes" id="UP000002494">
    <property type="component" value="Chromosome 1"/>
</dbReference>
<dbReference type="Bgee" id="ENSRNOG00000016748">
    <property type="expression patterns" value="Expressed in pancreas and 19 other cell types or tissues"/>
</dbReference>
<dbReference type="GO" id="GO:0005654">
    <property type="term" value="C:nucleoplasm"/>
    <property type="evidence" value="ECO:0007669"/>
    <property type="project" value="Ensembl"/>
</dbReference>
<dbReference type="GO" id="GO:0005634">
    <property type="term" value="C:nucleus"/>
    <property type="evidence" value="ECO:0000318"/>
    <property type="project" value="GO_Central"/>
</dbReference>
<dbReference type="GO" id="GO:0035861">
    <property type="term" value="C:site of double-strand break"/>
    <property type="evidence" value="ECO:0000250"/>
    <property type="project" value="UniProtKB"/>
</dbReference>
<dbReference type="GO" id="GO:0051575">
    <property type="term" value="F:5'-deoxyribose-5-phosphate lyase activity"/>
    <property type="evidence" value="ECO:0000250"/>
    <property type="project" value="UniProtKB"/>
</dbReference>
<dbReference type="GO" id="GO:0003677">
    <property type="term" value="F:DNA binding"/>
    <property type="evidence" value="ECO:0007669"/>
    <property type="project" value="UniProtKB-KW"/>
</dbReference>
<dbReference type="GO" id="GO:0003887">
    <property type="term" value="F:DNA-directed DNA polymerase activity"/>
    <property type="evidence" value="ECO:0000250"/>
    <property type="project" value="UniProtKB"/>
</dbReference>
<dbReference type="GO" id="GO:0046872">
    <property type="term" value="F:metal ion binding"/>
    <property type="evidence" value="ECO:0007669"/>
    <property type="project" value="UniProtKB-KW"/>
</dbReference>
<dbReference type="GO" id="GO:0006287">
    <property type="term" value="P:base-excision repair, gap-filling"/>
    <property type="evidence" value="ECO:0000250"/>
    <property type="project" value="UniProtKB"/>
</dbReference>
<dbReference type="GO" id="GO:0071897">
    <property type="term" value="P:DNA biosynthetic process"/>
    <property type="evidence" value="ECO:0000250"/>
    <property type="project" value="UniProtKB"/>
</dbReference>
<dbReference type="GO" id="GO:0006260">
    <property type="term" value="P:DNA replication"/>
    <property type="evidence" value="ECO:0007669"/>
    <property type="project" value="UniProtKB-KW"/>
</dbReference>
<dbReference type="GO" id="GO:0000724">
    <property type="term" value="P:double-strand break repair via homologous recombination"/>
    <property type="evidence" value="ECO:0000250"/>
    <property type="project" value="UniProtKB"/>
</dbReference>
<dbReference type="GO" id="GO:0006303">
    <property type="term" value="P:double-strand break repair via nonhomologous end joining"/>
    <property type="evidence" value="ECO:0000250"/>
    <property type="project" value="UniProtKB"/>
</dbReference>
<dbReference type="GO" id="GO:0006289">
    <property type="term" value="P:nucleotide-excision repair"/>
    <property type="evidence" value="ECO:0000266"/>
    <property type="project" value="RGD"/>
</dbReference>
<dbReference type="CDD" id="cd17715">
    <property type="entry name" value="BRCT_polymerase_lambda"/>
    <property type="match status" value="1"/>
</dbReference>
<dbReference type="CDD" id="cd00141">
    <property type="entry name" value="NT_POLXc"/>
    <property type="match status" value="1"/>
</dbReference>
<dbReference type="FunFam" id="3.40.50.10190:FF:000031">
    <property type="entry name" value="DNA polymerase"/>
    <property type="match status" value="1"/>
</dbReference>
<dbReference type="FunFam" id="1.10.150.110:FF:000004">
    <property type="entry name" value="DNA polymerase lambda"/>
    <property type="match status" value="1"/>
</dbReference>
<dbReference type="FunFam" id="1.10.150.20:FF:000010">
    <property type="entry name" value="DNA polymerase lambda"/>
    <property type="match status" value="1"/>
</dbReference>
<dbReference type="FunFam" id="3.30.210.10:FF:000001">
    <property type="entry name" value="DNA polymerase lambda"/>
    <property type="match status" value="1"/>
</dbReference>
<dbReference type="FunFam" id="3.30.460.10:FF:000020">
    <property type="entry name" value="DNA polymerase lambda"/>
    <property type="match status" value="1"/>
</dbReference>
<dbReference type="Gene3D" id="1.10.150.20">
    <property type="entry name" value="5' to 3' exonuclease, C-terminal subdomain"/>
    <property type="match status" value="1"/>
</dbReference>
<dbReference type="Gene3D" id="3.30.460.10">
    <property type="entry name" value="Beta Polymerase, domain 2"/>
    <property type="match status" value="1"/>
</dbReference>
<dbReference type="Gene3D" id="3.40.50.10190">
    <property type="entry name" value="BRCT domain"/>
    <property type="match status" value="1"/>
</dbReference>
<dbReference type="Gene3D" id="1.10.150.110">
    <property type="entry name" value="DNA polymerase beta, N-terminal domain-like"/>
    <property type="match status" value="1"/>
</dbReference>
<dbReference type="Gene3D" id="3.30.210.10">
    <property type="entry name" value="DNA polymerase, thumb domain"/>
    <property type="match status" value="1"/>
</dbReference>
<dbReference type="InterPro" id="IPR001357">
    <property type="entry name" value="BRCT_dom"/>
</dbReference>
<dbReference type="InterPro" id="IPR036420">
    <property type="entry name" value="BRCT_dom_sf"/>
</dbReference>
<dbReference type="InterPro" id="IPR002054">
    <property type="entry name" value="DNA-dir_DNA_pol_X"/>
</dbReference>
<dbReference type="InterPro" id="IPR019843">
    <property type="entry name" value="DNA_pol-X_BS"/>
</dbReference>
<dbReference type="InterPro" id="IPR010996">
    <property type="entry name" value="DNA_pol_b-like_N"/>
</dbReference>
<dbReference type="InterPro" id="IPR028207">
    <property type="entry name" value="DNA_pol_B_palm_palm"/>
</dbReference>
<dbReference type="InterPro" id="IPR018944">
    <property type="entry name" value="DNA_pol_lambd_fingers_domain"/>
</dbReference>
<dbReference type="InterPro" id="IPR027421">
    <property type="entry name" value="DNA_pol_lamdba_lyase_dom_sf"/>
</dbReference>
<dbReference type="InterPro" id="IPR037160">
    <property type="entry name" value="DNA_Pol_thumb_sf"/>
</dbReference>
<dbReference type="InterPro" id="IPR022312">
    <property type="entry name" value="DNA_pol_X"/>
</dbReference>
<dbReference type="InterPro" id="IPR002008">
    <property type="entry name" value="DNA_pol_X_beta-like"/>
</dbReference>
<dbReference type="InterPro" id="IPR043519">
    <property type="entry name" value="NT_sf"/>
</dbReference>
<dbReference type="InterPro" id="IPR029398">
    <property type="entry name" value="PolB_thumb"/>
</dbReference>
<dbReference type="PANTHER" id="PTHR11276:SF28">
    <property type="entry name" value="DNA POLYMERASE LAMBDA"/>
    <property type="match status" value="1"/>
</dbReference>
<dbReference type="PANTHER" id="PTHR11276">
    <property type="entry name" value="DNA POLYMERASE TYPE-X FAMILY MEMBER"/>
    <property type="match status" value="1"/>
</dbReference>
<dbReference type="Pfam" id="PF14792">
    <property type="entry name" value="DNA_pol_B_palm"/>
    <property type="match status" value="1"/>
</dbReference>
<dbReference type="Pfam" id="PF14791">
    <property type="entry name" value="DNA_pol_B_thumb"/>
    <property type="match status" value="1"/>
</dbReference>
<dbReference type="Pfam" id="PF10391">
    <property type="entry name" value="DNA_pol_lambd_f"/>
    <property type="match status" value="1"/>
</dbReference>
<dbReference type="Pfam" id="PF14716">
    <property type="entry name" value="HHH_8"/>
    <property type="match status" value="1"/>
</dbReference>
<dbReference type="PRINTS" id="PR00869">
    <property type="entry name" value="DNAPOLX"/>
</dbReference>
<dbReference type="PRINTS" id="PR00870">
    <property type="entry name" value="DNAPOLXBETA"/>
</dbReference>
<dbReference type="SMART" id="SM00483">
    <property type="entry name" value="POLXc"/>
    <property type="match status" value="1"/>
</dbReference>
<dbReference type="SUPFAM" id="SSF52113">
    <property type="entry name" value="BRCT domain"/>
    <property type="match status" value="1"/>
</dbReference>
<dbReference type="SUPFAM" id="SSF47802">
    <property type="entry name" value="DNA polymerase beta, N-terminal domain-like"/>
    <property type="match status" value="1"/>
</dbReference>
<dbReference type="SUPFAM" id="SSF81301">
    <property type="entry name" value="Nucleotidyltransferase"/>
    <property type="match status" value="1"/>
</dbReference>
<dbReference type="SUPFAM" id="SSF81585">
    <property type="entry name" value="PsbU/PolX domain-like"/>
    <property type="match status" value="1"/>
</dbReference>
<dbReference type="PROSITE" id="PS50172">
    <property type="entry name" value="BRCT"/>
    <property type="match status" value="1"/>
</dbReference>
<dbReference type="PROSITE" id="PS00522">
    <property type="entry name" value="DNA_POLYMERASE_X"/>
    <property type="match status" value="1"/>
</dbReference>
<reference key="1">
    <citation type="journal article" date="2004" name="Genome Res.">
        <title>The status, quality, and expansion of the NIH full-length cDNA project: the Mammalian Gene Collection (MGC).</title>
        <authorList>
            <consortium name="The MGC Project Team"/>
        </authorList>
    </citation>
    <scope>NUCLEOTIDE SEQUENCE [LARGE SCALE MRNA]</scope>
    <source>
        <tissue>Testis</tissue>
    </source>
</reference>
<protein>
    <recommendedName>
        <fullName evidence="5">DNA polymerase lambda</fullName>
        <shortName evidence="5">Pol Lambda</shortName>
        <ecNumber evidence="2">2.7.7.7</ecNumber>
        <ecNumber evidence="2">4.2.99.-</ecNumber>
    </recommendedName>
</protein>
<accession>Q5RKI3</accession>
<organism>
    <name type="scientific">Rattus norvegicus</name>
    <name type="common">Rat</name>
    <dbReference type="NCBI Taxonomy" id="10116"/>
    <lineage>
        <taxon>Eukaryota</taxon>
        <taxon>Metazoa</taxon>
        <taxon>Chordata</taxon>
        <taxon>Craniata</taxon>
        <taxon>Vertebrata</taxon>
        <taxon>Euteleostomi</taxon>
        <taxon>Mammalia</taxon>
        <taxon>Eutheria</taxon>
        <taxon>Euarchontoglires</taxon>
        <taxon>Glires</taxon>
        <taxon>Rodentia</taxon>
        <taxon>Myomorpha</taxon>
        <taxon>Muroidea</taxon>
        <taxon>Muridae</taxon>
        <taxon>Murinae</taxon>
        <taxon>Rattus</taxon>
    </lineage>
</organism>
<feature type="chain" id="PRO_0000218786" description="DNA polymerase lambda">
    <location>
        <begin position="1"/>
        <end position="573"/>
    </location>
</feature>
<feature type="domain" description="BRCT" evidence="3">
    <location>
        <begin position="35"/>
        <end position="131"/>
    </location>
</feature>
<feature type="region of interest" description="Disordered" evidence="4">
    <location>
        <begin position="126"/>
        <end position="235"/>
    </location>
</feature>
<feature type="region of interest" description="DNA-binding" evidence="2">
    <location>
        <begin position="263"/>
        <end position="277"/>
    </location>
</feature>
<feature type="region of interest" description="DNA-binding" evidence="2">
    <location>
        <begin position="343"/>
        <end position="346"/>
    </location>
</feature>
<feature type="region of interest" description="Involved in primer binding" evidence="1">
    <location>
        <begin position="418"/>
        <end position="427"/>
    </location>
</feature>
<feature type="region of interest" description="DNA-binding" evidence="2">
    <location>
        <begin position="464"/>
        <end position="503"/>
    </location>
</feature>
<feature type="compositionally biased region" description="Polar residues" evidence="4">
    <location>
        <begin position="127"/>
        <end position="149"/>
    </location>
</feature>
<feature type="active site" description="Schiff-base intermediate with DNA" evidence="2">
    <location>
        <position position="310"/>
    </location>
</feature>
<feature type="binding site" evidence="2">
    <location>
        <position position="384"/>
    </location>
    <ligand>
        <name>dCTP</name>
        <dbReference type="ChEBI" id="CHEBI:61481"/>
    </ligand>
</feature>
<feature type="binding site" evidence="2">
    <location>
        <begin position="415"/>
        <end position="418"/>
    </location>
    <ligand>
        <name>dCTP</name>
        <dbReference type="ChEBI" id="CHEBI:61481"/>
    </ligand>
</feature>
<feature type="binding site" evidence="2">
    <location>
        <begin position="424"/>
        <end position="427"/>
    </location>
    <ligand>
        <name>dCTP</name>
        <dbReference type="ChEBI" id="CHEBI:61481"/>
    </ligand>
</feature>
<feature type="binding site" evidence="2">
    <location>
        <position position="425"/>
    </location>
    <ligand>
        <name>Mn(2+)</name>
        <dbReference type="ChEBI" id="CHEBI:29035"/>
    </ligand>
</feature>
<feature type="binding site" evidence="2">
    <location>
        <position position="427"/>
    </location>
    <ligand>
        <name>Mn(2+)</name>
        <dbReference type="ChEBI" id="CHEBI:29035"/>
    </ligand>
</feature>
<feature type="binding site" evidence="2">
    <location>
        <position position="488"/>
    </location>
    <ligand>
        <name>Mn(2+)</name>
        <dbReference type="ChEBI" id="CHEBI:29035"/>
    </ligand>
</feature>
<feature type="binding site" evidence="2">
    <location>
        <position position="511"/>
    </location>
    <ligand>
        <name>dCTP</name>
        <dbReference type="ChEBI" id="CHEBI:61481"/>
    </ligand>
</feature>
<proteinExistence type="evidence at transcript level"/>